<evidence type="ECO:0000250" key="1"/>
<evidence type="ECO:0000255" key="2">
    <source>
        <dbReference type="HAMAP-Rule" id="MF_00047"/>
    </source>
</evidence>
<reference key="1">
    <citation type="journal article" date="2004" name="Environ. Microbiol.">
        <title>The genome of Desulfotalea psychrophila, a sulfate-reducing bacterium from permanently cold Arctic sediments.</title>
        <authorList>
            <person name="Rabus R."/>
            <person name="Ruepp A."/>
            <person name="Frickey T."/>
            <person name="Rattei T."/>
            <person name="Fartmann B."/>
            <person name="Stark M."/>
            <person name="Bauer M."/>
            <person name="Zibat A."/>
            <person name="Lombardot T."/>
            <person name="Becker I."/>
            <person name="Amann J."/>
            <person name="Gellner K."/>
            <person name="Teeling H."/>
            <person name="Leuschner W.D."/>
            <person name="Gloeckner F.-O."/>
            <person name="Lupas A.N."/>
            <person name="Amann R."/>
            <person name="Klenk H.-P."/>
        </authorList>
    </citation>
    <scope>NUCLEOTIDE SEQUENCE [LARGE SCALE GENOMIC DNA]</scope>
    <source>
        <strain>DSM 12343 / LSv54</strain>
    </source>
</reference>
<dbReference type="EC" id="6.3.2.4" evidence="2"/>
<dbReference type="EMBL" id="CR522870">
    <property type="protein sequence ID" value="CAG34787.1"/>
    <property type="molecule type" value="Genomic_DNA"/>
</dbReference>
<dbReference type="RefSeq" id="WP_011187303.1">
    <property type="nucleotide sequence ID" value="NC_006138.1"/>
</dbReference>
<dbReference type="SMR" id="Q6ASD8"/>
<dbReference type="STRING" id="177439.DP0058"/>
<dbReference type="KEGG" id="dps:DP0058"/>
<dbReference type="eggNOG" id="COG1181">
    <property type="taxonomic scope" value="Bacteria"/>
</dbReference>
<dbReference type="HOGENOM" id="CLU_039268_1_1_7"/>
<dbReference type="OrthoDB" id="9813261at2"/>
<dbReference type="UniPathway" id="UPA00219"/>
<dbReference type="Proteomes" id="UP000000602">
    <property type="component" value="Chromosome"/>
</dbReference>
<dbReference type="GO" id="GO:0005737">
    <property type="term" value="C:cytoplasm"/>
    <property type="evidence" value="ECO:0007669"/>
    <property type="project" value="UniProtKB-SubCell"/>
</dbReference>
<dbReference type="GO" id="GO:0005524">
    <property type="term" value="F:ATP binding"/>
    <property type="evidence" value="ECO:0007669"/>
    <property type="project" value="UniProtKB-KW"/>
</dbReference>
<dbReference type="GO" id="GO:0008716">
    <property type="term" value="F:D-alanine-D-alanine ligase activity"/>
    <property type="evidence" value="ECO:0007669"/>
    <property type="project" value="UniProtKB-UniRule"/>
</dbReference>
<dbReference type="GO" id="GO:0046872">
    <property type="term" value="F:metal ion binding"/>
    <property type="evidence" value="ECO:0007669"/>
    <property type="project" value="UniProtKB-KW"/>
</dbReference>
<dbReference type="GO" id="GO:0071555">
    <property type="term" value="P:cell wall organization"/>
    <property type="evidence" value="ECO:0007669"/>
    <property type="project" value="UniProtKB-KW"/>
</dbReference>
<dbReference type="GO" id="GO:0009252">
    <property type="term" value="P:peptidoglycan biosynthetic process"/>
    <property type="evidence" value="ECO:0007669"/>
    <property type="project" value="UniProtKB-UniRule"/>
</dbReference>
<dbReference type="GO" id="GO:0008360">
    <property type="term" value="P:regulation of cell shape"/>
    <property type="evidence" value="ECO:0007669"/>
    <property type="project" value="UniProtKB-KW"/>
</dbReference>
<dbReference type="Gene3D" id="3.40.50.20">
    <property type="match status" value="1"/>
</dbReference>
<dbReference type="Gene3D" id="3.30.1490.20">
    <property type="entry name" value="ATP-grasp fold, A domain"/>
    <property type="match status" value="1"/>
</dbReference>
<dbReference type="Gene3D" id="3.30.470.20">
    <property type="entry name" value="ATP-grasp fold, B domain"/>
    <property type="match status" value="1"/>
</dbReference>
<dbReference type="HAMAP" id="MF_00047">
    <property type="entry name" value="Dala_Dala_lig"/>
    <property type="match status" value="1"/>
</dbReference>
<dbReference type="InterPro" id="IPR011761">
    <property type="entry name" value="ATP-grasp"/>
</dbReference>
<dbReference type="InterPro" id="IPR013815">
    <property type="entry name" value="ATP_grasp_subdomain_1"/>
</dbReference>
<dbReference type="InterPro" id="IPR000291">
    <property type="entry name" value="D-Ala_lig_Van_CS"/>
</dbReference>
<dbReference type="InterPro" id="IPR005905">
    <property type="entry name" value="D_ala_D_ala"/>
</dbReference>
<dbReference type="InterPro" id="IPR011095">
    <property type="entry name" value="Dala_Dala_lig_C"/>
</dbReference>
<dbReference type="InterPro" id="IPR011127">
    <property type="entry name" value="Dala_Dala_lig_N"/>
</dbReference>
<dbReference type="InterPro" id="IPR016185">
    <property type="entry name" value="PreATP-grasp_dom_sf"/>
</dbReference>
<dbReference type="NCBIfam" id="TIGR01205">
    <property type="entry name" value="D_ala_D_alaTIGR"/>
    <property type="match status" value="1"/>
</dbReference>
<dbReference type="NCBIfam" id="NF002378">
    <property type="entry name" value="PRK01372.1"/>
    <property type="match status" value="1"/>
</dbReference>
<dbReference type="PANTHER" id="PTHR23132">
    <property type="entry name" value="D-ALANINE--D-ALANINE LIGASE"/>
    <property type="match status" value="1"/>
</dbReference>
<dbReference type="PANTHER" id="PTHR23132:SF23">
    <property type="entry name" value="D-ALANINE--D-ALANINE LIGASE B"/>
    <property type="match status" value="1"/>
</dbReference>
<dbReference type="Pfam" id="PF07478">
    <property type="entry name" value="Dala_Dala_lig_C"/>
    <property type="match status" value="1"/>
</dbReference>
<dbReference type="Pfam" id="PF01820">
    <property type="entry name" value="Dala_Dala_lig_N"/>
    <property type="match status" value="1"/>
</dbReference>
<dbReference type="PIRSF" id="PIRSF039102">
    <property type="entry name" value="Ddl/VanB"/>
    <property type="match status" value="1"/>
</dbReference>
<dbReference type="SMART" id="SM01209">
    <property type="entry name" value="GARS_A"/>
    <property type="match status" value="1"/>
</dbReference>
<dbReference type="SUPFAM" id="SSF56059">
    <property type="entry name" value="Glutathione synthetase ATP-binding domain-like"/>
    <property type="match status" value="1"/>
</dbReference>
<dbReference type="SUPFAM" id="SSF52440">
    <property type="entry name" value="PreATP-grasp domain"/>
    <property type="match status" value="1"/>
</dbReference>
<dbReference type="PROSITE" id="PS50975">
    <property type="entry name" value="ATP_GRASP"/>
    <property type="match status" value="1"/>
</dbReference>
<dbReference type="PROSITE" id="PS00843">
    <property type="entry name" value="DALA_DALA_LIGASE_1"/>
    <property type="match status" value="1"/>
</dbReference>
<dbReference type="PROSITE" id="PS00844">
    <property type="entry name" value="DALA_DALA_LIGASE_2"/>
    <property type="match status" value="1"/>
</dbReference>
<keyword id="KW-0067">ATP-binding</keyword>
<keyword id="KW-0133">Cell shape</keyword>
<keyword id="KW-0961">Cell wall biogenesis/degradation</keyword>
<keyword id="KW-0963">Cytoplasm</keyword>
<keyword id="KW-0436">Ligase</keyword>
<keyword id="KW-0460">Magnesium</keyword>
<keyword id="KW-0464">Manganese</keyword>
<keyword id="KW-0479">Metal-binding</keyword>
<keyword id="KW-0547">Nucleotide-binding</keyword>
<keyword id="KW-0573">Peptidoglycan synthesis</keyword>
<keyword id="KW-1185">Reference proteome</keyword>
<gene>
    <name evidence="2" type="primary">ddl</name>
    <name type="ordered locus">DP0058</name>
</gene>
<protein>
    <recommendedName>
        <fullName evidence="2">D-alanine--D-alanine ligase</fullName>
        <ecNumber evidence="2">6.3.2.4</ecNumber>
    </recommendedName>
    <alternativeName>
        <fullName evidence="2">D-Ala-D-Ala ligase</fullName>
    </alternativeName>
    <alternativeName>
        <fullName evidence="2">D-alanylalanine synthetase</fullName>
    </alternativeName>
</protein>
<comment type="function">
    <text evidence="2">Cell wall formation.</text>
</comment>
<comment type="catalytic activity">
    <reaction evidence="2">
        <text>2 D-alanine + ATP = D-alanyl-D-alanine + ADP + phosphate + H(+)</text>
        <dbReference type="Rhea" id="RHEA:11224"/>
        <dbReference type="ChEBI" id="CHEBI:15378"/>
        <dbReference type="ChEBI" id="CHEBI:30616"/>
        <dbReference type="ChEBI" id="CHEBI:43474"/>
        <dbReference type="ChEBI" id="CHEBI:57416"/>
        <dbReference type="ChEBI" id="CHEBI:57822"/>
        <dbReference type="ChEBI" id="CHEBI:456216"/>
        <dbReference type="EC" id="6.3.2.4"/>
    </reaction>
</comment>
<comment type="cofactor">
    <cofactor evidence="1">
        <name>Mg(2+)</name>
        <dbReference type="ChEBI" id="CHEBI:18420"/>
    </cofactor>
    <cofactor evidence="1">
        <name>Mn(2+)</name>
        <dbReference type="ChEBI" id="CHEBI:29035"/>
    </cofactor>
    <text evidence="1">Binds 2 magnesium or manganese ions per subunit.</text>
</comment>
<comment type="pathway">
    <text evidence="2">Cell wall biogenesis; peptidoglycan biosynthesis.</text>
</comment>
<comment type="subcellular location">
    <subcellularLocation>
        <location evidence="2">Cytoplasm</location>
    </subcellularLocation>
</comment>
<comment type="similarity">
    <text evidence="2">Belongs to the D-alanine--D-alanine ligase family.</text>
</comment>
<sequence>MQEQRAERLRIALIAGGTSGEREVSLTGADGVERILDKEKYLVSRYDSATDLPRLAADAASIDFAFILLHGLHGEDGTIQGFLDLLGIPYQGSGVLGSALAMDKDLAKEFYYNAELPVADWHTIAAGDFFYSEELIEDLGLPLVVKPACAGSSIGISLAHTEEELLAGINHARDCSAGAIMVEQFIKGRELTCAVLGNDDLQALPVLEIVPGDKYAFFDYEAKYQPGASEEICPALIADALREQVQDHAIRAHQALRLRGYSRTDFIYGEDGKLYLLETNTIPGMTETSILPQEAAATGMDFPSLLDTLIELGLEKSKGKKG</sequence>
<accession>Q6ASD8</accession>
<name>DDL_DESPS</name>
<proteinExistence type="inferred from homology"/>
<feature type="chain" id="PRO_0000341087" description="D-alanine--D-alanine ligase">
    <location>
        <begin position="1"/>
        <end position="322"/>
    </location>
</feature>
<feature type="domain" description="ATP-grasp" evidence="2">
    <location>
        <begin position="108"/>
        <end position="311"/>
    </location>
</feature>
<feature type="binding site" evidence="2">
    <location>
        <begin position="136"/>
        <end position="192"/>
    </location>
    <ligand>
        <name>ATP</name>
        <dbReference type="ChEBI" id="CHEBI:30616"/>
    </ligand>
</feature>
<feature type="binding site" evidence="2">
    <location>
        <position position="265"/>
    </location>
    <ligand>
        <name>Mg(2+)</name>
        <dbReference type="ChEBI" id="CHEBI:18420"/>
        <label>1</label>
    </ligand>
</feature>
<feature type="binding site" evidence="2">
    <location>
        <position position="278"/>
    </location>
    <ligand>
        <name>Mg(2+)</name>
        <dbReference type="ChEBI" id="CHEBI:18420"/>
        <label>1</label>
    </ligand>
</feature>
<feature type="binding site" evidence="2">
    <location>
        <position position="278"/>
    </location>
    <ligand>
        <name>Mg(2+)</name>
        <dbReference type="ChEBI" id="CHEBI:18420"/>
        <label>2</label>
    </ligand>
</feature>
<feature type="binding site" evidence="2">
    <location>
        <position position="280"/>
    </location>
    <ligand>
        <name>Mg(2+)</name>
        <dbReference type="ChEBI" id="CHEBI:18420"/>
        <label>2</label>
    </ligand>
</feature>
<organism>
    <name type="scientific">Desulfotalea psychrophila (strain LSv54 / DSM 12343)</name>
    <dbReference type="NCBI Taxonomy" id="177439"/>
    <lineage>
        <taxon>Bacteria</taxon>
        <taxon>Pseudomonadati</taxon>
        <taxon>Thermodesulfobacteriota</taxon>
        <taxon>Desulfobulbia</taxon>
        <taxon>Desulfobulbales</taxon>
        <taxon>Desulfocapsaceae</taxon>
        <taxon>Desulfotalea</taxon>
    </lineage>
</organism>